<name>REP_CALCV</name>
<feature type="chain" id="PRO_0000320110" description="Replication-associated protein">
    <location>
        <begin position="1"/>
        <end position="349"/>
    </location>
</feature>
<feature type="domain" description="CRESS-DNA virus Rep endonuclease" evidence="3">
    <location>
        <begin position="9"/>
        <end position="118"/>
    </location>
</feature>
<feature type="region of interest" description="Binding to RBR1" evidence="1">
    <location>
        <begin position="141"/>
        <end position="151"/>
    </location>
</feature>
<feature type="region of interest" description="Oligomerization" evidence="1">
    <location>
        <begin position="154"/>
        <end position="174"/>
    </location>
</feature>
<feature type="short sequence motif" description="RCR-1" evidence="3">
    <location>
        <begin position="16"/>
        <end position="19"/>
    </location>
</feature>
<feature type="short sequence motif" description="RCR-2" evidence="3">
    <location>
        <begin position="59"/>
        <end position="61"/>
    </location>
</feature>
<feature type="short sequence motif" description="RCR-3" evidence="3">
    <location>
        <begin position="105"/>
        <end position="108"/>
    </location>
</feature>
<feature type="active site" description="For DNA cleavage activity" evidence="3">
    <location>
        <position position="105"/>
    </location>
</feature>
<feature type="binding site" evidence="3">
    <location>
        <position position="51"/>
    </location>
    <ligand>
        <name>a divalent metal cation</name>
        <dbReference type="ChEBI" id="CHEBI:60240"/>
    </ligand>
</feature>
<feature type="binding site" evidence="3">
    <location>
        <position position="59"/>
    </location>
    <ligand>
        <name>a divalent metal cation</name>
        <dbReference type="ChEBI" id="CHEBI:60240"/>
    </ligand>
</feature>
<feature type="binding site" evidence="3">
    <location>
        <position position="61"/>
    </location>
    <ligand>
        <name>a divalent metal cation</name>
        <dbReference type="ChEBI" id="CHEBI:60240"/>
    </ligand>
</feature>
<feature type="binding site" evidence="3">
    <location>
        <position position="109"/>
    </location>
    <ligand>
        <name>a divalent metal cation</name>
        <dbReference type="ChEBI" id="CHEBI:60240"/>
    </ligand>
</feature>
<feature type="binding site" evidence="2">
    <location>
        <begin position="220"/>
        <end position="227"/>
    </location>
    <ligand>
        <name>ATP</name>
        <dbReference type="ChEBI" id="CHEBI:30616"/>
    </ligand>
</feature>
<reference key="1">
    <citation type="journal article" date="1992" name="Phytopathology">
        <title>Cloning, identification and partial sequencing of a new geminivirus infecting Brassicaceae.</title>
        <authorList>
            <person name="Abouzid A.M."/>
            <person name="Hiebert E."/>
            <person name="Strandberg J.O."/>
        </authorList>
    </citation>
    <scope>NUCLEOTIDE SEQUENCE [GENOMIC DNA]</scope>
</reference>
<reference key="2">
    <citation type="submission" date="2001-08" db="EMBL/GenBank/DDBJ databases">
        <authorList>
            <person name="Abouzid A.M."/>
            <person name="Hiebert E."/>
            <person name="Strandberg J.O."/>
        </authorList>
    </citation>
    <scope>SEQUENCE REVISION</scope>
</reference>
<sequence length="349" mass="39231">MPRNPKSFRLAARNIFLTYPQCDIPKDEALQMLQTLSWSVVKPTYIRVAREEHSDGFPHLHCLIQLSGKSNIKDARFFDITHPRRSANFHPNIQAAKDTNAVKNYITKDGDYCESGQYKVSGGTKANKDDVYHNAVNAGCVEEALAIIRAGDPKTFIVSYHNVRANIERLFTKAPEPWAPPFQLSSFTNVPDEMSSWADDYFGRSAAARAERPISIIVEGDSRTGKTMWARALGPHNYLSGHLDFNSKVFSNNAEYNVIDDIAPHYLKLKHWKELIGAQRDWQSNCKYGKPVQIKGGIPSIVLCNPGEGSSYISFLNKEENASLRAWTTKNAKFITLEAPLYQSTAQDC</sequence>
<accession>Q96704</accession>
<protein>
    <recommendedName>
        <fullName>Replication-associated protein</fullName>
        <shortName>Rep</shortName>
        <ecNumber>2.7.7.-</ecNumber>
        <ecNumber>3.1.21.-</ecNumber>
    </recommendedName>
    <alternativeName>
        <fullName>40.2 kDa protein</fullName>
    </alternativeName>
    <alternativeName>
        <fullName>Protein AC1</fullName>
    </alternativeName>
    <alternativeName>
        <fullName>Protein AL1</fullName>
    </alternativeName>
</protein>
<evidence type="ECO:0000250" key="1"/>
<evidence type="ECO:0000255" key="2"/>
<evidence type="ECO:0000255" key="3">
    <source>
        <dbReference type="PROSITE-ProRule" id="PRU01364"/>
    </source>
</evidence>
<evidence type="ECO:0000305" key="4"/>
<organism>
    <name type="scientific">Cabbage leaf curl virus (isolate Jamaica)</name>
    <name type="common">CaLCuV</name>
    <dbReference type="NCBI Taxonomy" id="345184"/>
    <lineage>
        <taxon>Viruses</taxon>
        <taxon>Monodnaviria</taxon>
        <taxon>Shotokuvirae</taxon>
        <taxon>Cressdnaviricota</taxon>
        <taxon>Repensiviricetes</taxon>
        <taxon>Geplafuvirales</taxon>
        <taxon>Geminiviridae</taxon>
        <taxon>Begomovirus</taxon>
    </lineage>
</organism>
<organismHost>
    <name type="scientific">Brassica oleracea</name>
    <name type="common">Wild cabbage</name>
    <dbReference type="NCBI Taxonomy" id="3712"/>
</organismHost>
<keyword id="KW-0067">ATP-binding</keyword>
<keyword id="KW-0190">Covalent protein-DNA linkage</keyword>
<keyword id="KW-0235">DNA replication</keyword>
<keyword id="KW-0238">DNA-binding</keyword>
<keyword id="KW-0255">Endonuclease</keyword>
<keyword id="KW-0347">Helicase</keyword>
<keyword id="KW-1048">Host nucleus</keyword>
<keyword id="KW-0945">Host-virus interaction</keyword>
<keyword id="KW-0378">Hydrolase</keyword>
<keyword id="KW-0479">Metal-binding</keyword>
<keyword id="KW-0511">Multifunctional enzyme</keyword>
<keyword id="KW-0540">Nuclease</keyword>
<keyword id="KW-0547">Nucleotide-binding</keyword>
<keyword id="KW-0548">Nucleotidyltransferase</keyword>
<keyword id="KW-0808">Transferase</keyword>
<comment type="function">
    <text evidence="1">Essential for the replication of viral ssDNA. The closed circular ssDNA genome is first converted to a superhelical dsDNA. Rep binds a specific region at the genome origin of replication. It introduces an endonucleolytic nick within the conserved sequence 5'-TAATATTAC-3' in the intergenic region of the genome present in all geminiviruses, thereby initiating the rolling circle replication (RCR). Following cleavage, binds covalently to the 5'-phosphate of DNA as a tyrosyl ester. The cleavage gives rise to a free 3'-OH that serves as a primer for the cellular DNA polymerase. The polymerase synthesizes the (+) strand DNA by rolling circle mechanism. After one round of replication, a Rep-catalyzed nucleotidyl transfer reaction releases a circular single-stranded virus genome, thereby terminating the replication. Displays origin-specific DNA cleavage, nucleotidyl transferase, ATPase and helicase activities (By similarity).</text>
</comment>
<comment type="cofactor">
    <cofactor evidence="3">
        <name>Mg(2+)</name>
        <dbReference type="ChEBI" id="CHEBI:18420"/>
    </cofactor>
    <cofactor evidence="3">
        <name>Mn(2+)</name>
        <dbReference type="ChEBI" id="CHEBI:29035"/>
    </cofactor>
    <text evidence="3">Divalent metal cations, possibly Mg(2+) or Mn(2+).</text>
</comment>
<comment type="subunit">
    <text evidence="1">Homooligomer. Interacts with the replication enhancer protein (REn). Interacts with host retinoblastoma-related protein 1 (RBR1), and may thereby induce the transcription of host replicative enzymes even if the cell is not dividing anymore. Interacts with host PCNA. Interacts with host SCE1 protein (By similarity).</text>
</comment>
<comment type="subcellular location">
    <subcellularLocation>
        <location evidence="1">Host nucleus</location>
    </subcellularLocation>
</comment>
<comment type="domain">
    <text evidence="1">There are 3 rolling circle replication (RCR) motifs. RCR-2 is probably involved in metal coordination. RCR-3 is required for phosphodiester bond cleavage for initiation of RCR (By similarity).</text>
</comment>
<comment type="similarity">
    <text evidence="4">Belongs to the geminiviridae Rep protein family.</text>
</comment>
<gene>
    <name type="ORF">AC1</name>
    <name type="ORF">AL1</name>
</gene>
<proteinExistence type="inferred from homology"/>
<dbReference type="EC" id="2.7.7.-"/>
<dbReference type="EC" id="3.1.21.-"/>
<dbReference type="EMBL" id="U65529">
    <property type="protein sequence ID" value="AAB17963.2"/>
    <property type="molecule type" value="Genomic_DNA"/>
</dbReference>
<dbReference type="SMR" id="Q96704"/>
<dbReference type="KEGG" id="vg:1725548"/>
<dbReference type="Proteomes" id="UP000007622">
    <property type="component" value="Genome"/>
</dbReference>
<dbReference type="GO" id="GO:0042025">
    <property type="term" value="C:host cell nucleus"/>
    <property type="evidence" value="ECO:0007669"/>
    <property type="project" value="UniProtKB-SubCell"/>
</dbReference>
<dbReference type="GO" id="GO:0005524">
    <property type="term" value="F:ATP binding"/>
    <property type="evidence" value="ECO:0007669"/>
    <property type="project" value="UniProtKB-KW"/>
</dbReference>
<dbReference type="GO" id="GO:0003677">
    <property type="term" value="F:DNA binding"/>
    <property type="evidence" value="ECO:0007669"/>
    <property type="project" value="UniProtKB-KW"/>
</dbReference>
<dbReference type="GO" id="GO:0016888">
    <property type="term" value="F:endodeoxyribonuclease activity, producing 5'-phosphomonoesters"/>
    <property type="evidence" value="ECO:0007669"/>
    <property type="project" value="InterPro"/>
</dbReference>
<dbReference type="GO" id="GO:0004386">
    <property type="term" value="F:helicase activity"/>
    <property type="evidence" value="ECO:0007669"/>
    <property type="project" value="UniProtKB-KW"/>
</dbReference>
<dbReference type="GO" id="GO:0046872">
    <property type="term" value="F:metal ion binding"/>
    <property type="evidence" value="ECO:0007669"/>
    <property type="project" value="UniProtKB-KW"/>
</dbReference>
<dbReference type="GO" id="GO:0016779">
    <property type="term" value="F:nucleotidyltransferase activity"/>
    <property type="evidence" value="ECO:0007669"/>
    <property type="project" value="UniProtKB-KW"/>
</dbReference>
<dbReference type="GO" id="GO:0005198">
    <property type="term" value="F:structural molecule activity"/>
    <property type="evidence" value="ECO:0007669"/>
    <property type="project" value="InterPro"/>
</dbReference>
<dbReference type="GO" id="GO:0006260">
    <property type="term" value="P:DNA replication"/>
    <property type="evidence" value="ECO:0007669"/>
    <property type="project" value="UniProtKB-KW"/>
</dbReference>
<dbReference type="Gene3D" id="3.40.1310.20">
    <property type="match status" value="1"/>
</dbReference>
<dbReference type="InterPro" id="IPR049912">
    <property type="entry name" value="CRESS_DNA_REP"/>
</dbReference>
<dbReference type="InterPro" id="IPR001301">
    <property type="entry name" value="Gemini_AL1_CLV"/>
</dbReference>
<dbReference type="InterPro" id="IPR001191">
    <property type="entry name" value="Gemini_AL1_REP"/>
</dbReference>
<dbReference type="InterPro" id="IPR022692">
    <property type="entry name" value="Gemini_AL1_REP_central"/>
</dbReference>
<dbReference type="Pfam" id="PF00799">
    <property type="entry name" value="Gemini_AL1"/>
    <property type="match status" value="1"/>
</dbReference>
<dbReference type="Pfam" id="PF08283">
    <property type="entry name" value="Gemini_AL1_M"/>
    <property type="match status" value="1"/>
</dbReference>
<dbReference type="PRINTS" id="PR00227">
    <property type="entry name" value="GEMCOATAL1"/>
</dbReference>
<dbReference type="PRINTS" id="PR00228">
    <property type="entry name" value="GEMCOATCLVL1"/>
</dbReference>
<dbReference type="SUPFAM" id="SSF55464">
    <property type="entry name" value="Origin of replication-binding domain, RBD-like"/>
    <property type="match status" value="1"/>
</dbReference>
<dbReference type="PROSITE" id="PS52020">
    <property type="entry name" value="CRESS_DNA_REP"/>
    <property type="match status" value="1"/>
</dbReference>